<comment type="function">
    <text evidence="3 4 5 6">Microtubule inner protein involved in the attachment of outer dynein arms (ODAs) to dynein-decorated doublet microtubules (DMTs) in cilia axoneme, which is required for motile cilia beating.</text>
</comment>
<comment type="subunit">
    <text evidence="1 4 5 6">Microtubule inner protein component of sperm flagellar doublet microtubules (PubMed:37295417, PubMed:37865089, PubMed:37989994). Interacts with CFAP53, ODAD1 and ODAD3; the interactions link the outer dynein arms docking complex (ODA-DC) to the internal microtubule inner proteins (MIP) in cilium axoneme (By similarity).</text>
</comment>
<comment type="subcellular location">
    <subcellularLocation>
        <location evidence="1">Cytoplasm</location>
        <location evidence="1">Cytoskeleton</location>
        <location evidence="1">Cilium axoneme</location>
    </subcellularLocation>
    <subcellularLocation>
        <location evidence="4 5 6">Cytoplasm</location>
        <location evidence="4 5 6">Cytoskeleton</location>
        <location evidence="4 5 6">Flagellum axoneme</location>
    </subcellularLocation>
</comment>
<comment type="disruption phenotype">
    <text evidence="3">Mutants born at the expected frequency (PubMed:34715025). At 8 dpc, they have a reduced beat frequency of nodal cilia (PubMed:34715025). The motility of tracheal cilia in adult mice is also affected (PubMed:34715025). 25% of tracheal cilia axonemes have missing dynein arms (PubMed:34715025). Double Pierce1 and Pierce2 mutants show high levels of embryonic and pre-weaning lethality. The few mice that survive birth display hydrocephalus and laterality abnormalities, dying by 20 days of age (PubMed:34715025).</text>
</comment>
<comment type="similarity">
    <text evidence="7">Belongs to the PIERCE2 family.</text>
</comment>
<proteinExistence type="evidence at protein level"/>
<accession>V9GXK1</accession>
<name>PIRC2_MOUSE</name>
<keyword id="KW-0002">3D-structure</keyword>
<keyword id="KW-0966">Cell projection</keyword>
<keyword id="KW-0969">Cilium</keyword>
<keyword id="KW-0963">Cytoplasm</keyword>
<keyword id="KW-0206">Cytoskeleton</keyword>
<keyword id="KW-0282">Flagellum</keyword>
<keyword id="KW-1185">Reference proteome</keyword>
<gene>
    <name evidence="8" type="primary">Pierce2</name>
    <name evidence="8" type="synonym">Ccpg1os</name>
</gene>
<organism evidence="9">
    <name type="scientific">Mus musculus</name>
    <name type="common">Mouse</name>
    <dbReference type="NCBI Taxonomy" id="10090"/>
    <lineage>
        <taxon>Eukaryota</taxon>
        <taxon>Metazoa</taxon>
        <taxon>Chordata</taxon>
        <taxon>Craniata</taxon>
        <taxon>Vertebrata</taxon>
        <taxon>Euteleostomi</taxon>
        <taxon>Mammalia</taxon>
        <taxon>Eutheria</taxon>
        <taxon>Euarchontoglires</taxon>
        <taxon>Glires</taxon>
        <taxon>Rodentia</taxon>
        <taxon>Myomorpha</taxon>
        <taxon>Muroidea</taxon>
        <taxon>Muridae</taxon>
        <taxon>Murinae</taxon>
        <taxon>Mus</taxon>
        <taxon>Mus</taxon>
    </lineage>
</organism>
<evidence type="ECO:0000250" key="1">
    <source>
        <dbReference type="UniProtKB" id="A0A3Q1LFK7"/>
    </source>
</evidence>
<evidence type="ECO:0000256" key="2">
    <source>
        <dbReference type="SAM" id="MobiDB-lite"/>
    </source>
</evidence>
<evidence type="ECO:0000269" key="3">
    <source>
    </source>
</evidence>
<evidence type="ECO:0000269" key="4">
    <source>
    </source>
</evidence>
<evidence type="ECO:0000269" key="5">
    <source>
    </source>
</evidence>
<evidence type="ECO:0000269" key="6">
    <source>
    </source>
</evidence>
<evidence type="ECO:0000305" key="7"/>
<evidence type="ECO:0000312" key="8">
    <source>
        <dbReference type="MGI" id="MGI:3648770"/>
    </source>
</evidence>
<evidence type="ECO:0000312" key="9">
    <source>
        <dbReference type="Proteomes" id="UP000000589"/>
    </source>
</evidence>
<evidence type="ECO:0007744" key="10">
    <source>
        <dbReference type="PDB" id="8I7R"/>
    </source>
</evidence>
<evidence type="ECO:0007744" key="11">
    <source>
        <dbReference type="PDB" id="8IYJ"/>
    </source>
</evidence>
<evidence type="ECO:0007744" key="12">
    <source>
        <dbReference type="PDB" id="8TO0"/>
    </source>
</evidence>
<feature type="chain" id="PRO_0000455517" description="Piercer of microtubule wall 2 protein">
    <location>
        <begin position="1"/>
        <end position="122"/>
    </location>
</feature>
<feature type="region of interest" description="Disordered" evidence="2">
    <location>
        <begin position="1"/>
        <end position="26"/>
    </location>
</feature>
<feature type="region of interest" description="Disordered" evidence="2">
    <location>
        <begin position="99"/>
        <end position="122"/>
    </location>
</feature>
<feature type="compositionally biased region" description="Basic and acidic residues" evidence="2">
    <location>
        <begin position="1"/>
        <end position="23"/>
    </location>
</feature>
<feature type="compositionally biased region" description="Polar residues" evidence="2">
    <location>
        <begin position="113"/>
        <end position="122"/>
    </location>
</feature>
<reference evidence="9" key="1">
    <citation type="journal article" date="2009" name="PLoS Biol.">
        <title>Lineage-specific biology revealed by a finished genome assembly of the mouse.</title>
        <authorList>
            <person name="Church D.M."/>
            <person name="Goodstadt L."/>
            <person name="Hillier L.W."/>
            <person name="Zody M.C."/>
            <person name="Goldstein S."/>
            <person name="She X."/>
            <person name="Bult C.J."/>
            <person name="Agarwala R."/>
            <person name="Cherry J.L."/>
            <person name="DiCuccio M."/>
            <person name="Hlavina W."/>
            <person name="Kapustin Y."/>
            <person name="Meric P."/>
            <person name="Maglott D."/>
            <person name="Birtle Z."/>
            <person name="Marques A.C."/>
            <person name="Graves T."/>
            <person name="Zhou S."/>
            <person name="Teague B."/>
            <person name="Potamousis K."/>
            <person name="Churas C."/>
            <person name="Place M."/>
            <person name="Herschleb J."/>
            <person name="Runnheim R."/>
            <person name="Forrest D."/>
            <person name="Amos-Landgraf J."/>
            <person name="Schwartz D.C."/>
            <person name="Cheng Z."/>
            <person name="Lindblad-Toh K."/>
            <person name="Eichler E.E."/>
            <person name="Ponting C.P."/>
        </authorList>
    </citation>
    <scope>NUCLEOTIDE SEQUENCE [LARGE SCALE GENOMIC DNA]</scope>
    <source>
        <strain evidence="9">C57BL/6J</strain>
    </source>
</reference>
<reference key="2">
    <citation type="submission" date="2013-12" db="UniProtKB">
        <authorList>
            <consortium name="Ensembl"/>
        </authorList>
    </citation>
    <scope>IDENTIFICATION</scope>
    <source>
        <strain>C57BL/6J</strain>
    </source>
</reference>
<reference key="3">
    <citation type="journal article" date="2021" name="Cell">
        <title>De novo identification of mammalian ciliary motility proteins using cryo-EM.</title>
        <authorList>
            <person name="Gui M."/>
            <person name="Farley H."/>
            <person name="Anujan P."/>
            <person name="Anderson J.R."/>
            <person name="Maxwell D.W."/>
            <person name="Whitchurch J.B."/>
            <person name="Botsch J.J."/>
            <person name="Qiu T."/>
            <person name="Meleppattu S."/>
            <person name="Singh S.K."/>
            <person name="Zhang Q."/>
            <person name="Thompson J."/>
            <person name="Lucas J.S."/>
            <person name="Bingle C.D."/>
            <person name="Norris D.P."/>
            <person name="Roy S."/>
            <person name="Brown A."/>
        </authorList>
    </citation>
    <scope>FUNCTION</scope>
    <scope>DISRUPTION PHENOTYPE</scope>
</reference>
<reference evidence="11" key="4">
    <citation type="journal article" date="2023" name="Cell">
        <title>Structures of sperm flagellar doublet microtubules expand the genetic spectrum of male infertility.</title>
        <authorList>
            <person name="Zhou L."/>
            <person name="Liu H."/>
            <person name="Liu S."/>
            <person name="Yang X."/>
            <person name="Dong Y."/>
            <person name="Pan Y."/>
            <person name="Xiao Z."/>
            <person name="Zheng B."/>
            <person name="Sun Y."/>
            <person name="Huang P."/>
            <person name="Zhang X."/>
            <person name="Hu J."/>
            <person name="Sun R."/>
            <person name="Feng S."/>
            <person name="Zhu Y."/>
            <person name="Liu M."/>
            <person name="Gui M."/>
            <person name="Wu J."/>
        </authorList>
    </citation>
    <scope>STRUCTURE BY ELECTRON MICROSCOPY (3.50 ANGSTROMS) OF SPERM FLAGELLAR DOUBLET MICROTUBULES</scope>
    <scope>FUNCTION</scope>
    <scope>SUBCELLULAR LOCATION</scope>
    <scope>SUBUNIT</scope>
</reference>
<reference evidence="12" key="5">
    <citation type="journal article" date="2023" name="Cell">
        <title>De novo protein identification in mammalian sperm using in situ cryoelectron tomography and AlphaFold2 docking.</title>
        <authorList>
            <person name="Chen Z."/>
            <person name="Shiozaki M."/>
            <person name="Haas K.M."/>
            <person name="Skinner W.M."/>
            <person name="Zhao S."/>
            <person name="Guo C."/>
            <person name="Polacco B.J."/>
            <person name="Yu Z."/>
            <person name="Krogan N.J."/>
            <person name="Lishko P.V."/>
            <person name="Kaake R.M."/>
            <person name="Vale R.D."/>
            <person name="Agard D.A."/>
        </authorList>
    </citation>
    <scope>STRUCTURE BY ELECTRON MICROSCOPY (7.70 ANGSTROMS) OF SPERM FLAGELLAR DOUBLET MICROTUBULES</scope>
    <scope>FUNCTION</scope>
    <scope>SUBCELLULAR LOCATION</scope>
    <scope>SUBUNIT</scope>
</reference>
<reference evidence="10" key="6">
    <citation type="journal article" date="2023" name="Cell Discov.">
        <title>In-cell structural insight into the stability of sperm microtubule doublet.</title>
        <authorList>
            <person name="Tai L."/>
            <person name="Yin G."/>
            <person name="Huang X."/>
            <person name="Sun F."/>
            <person name="Zhu Y."/>
        </authorList>
    </citation>
    <scope>STRUCTURE BY ELECTRON MICROSCOPY (4.50 ANGSTROMS)</scope>
    <scope>FUNCTION</scope>
    <scope>SUBUNIT</scope>
    <scope>SUBCELLULAR LOCATION</scope>
</reference>
<protein>
    <recommendedName>
        <fullName evidence="8">Piercer of microtubule wall 2 protein</fullName>
    </recommendedName>
</protein>
<dbReference type="CCDS" id="CCDS72276.1"/>
<dbReference type="RefSeq" id="NP_001185718.1">
    <property type="nucleotide sequence ID" value="NM_001198789.1"/>
</dbReference>
<dbReference type="PDB" id="8I7R">
    <property type="method" value="EM"/>
    <property type="resolution" value="6.50 A"/>
    <property type="chains" value="N=1-122"/>
</dbReference>
<dbReference type="PDB" id="8IYJ">
    <property type="method" value="EM"/>
    <property type="resolution" value="3.50 A"/>
    <property type="chains" value="G=1-122"/>
</dbReference>
<dbReference type="PDB" id="8TO0">
    <property type="method" value="EM"/>
    <property type="resolution" value="7.70 A"/>
    <property type="chains" value="G=1-122"/>
</dbReference>
<dbReference type="PDBsum" id="8I7R"/>
<dbReference type="PDBsum" id="8IYJ"/>
<dbReference type="PDBsum" id="8TO0"/>
<dbReference type="EMDB" id="EMD-35230"/>
<dbReference type="EMDB" id="EMD-35823"/>
<dbReference type="EMDB" id="EMD-41431"/>
<dbReference type="SMR" id="V9GXK1"/>
<dbReference type="FunCoup" id="V9GXK1">
    <property type="interactions" value="2"/>
</dbReference>
<dbReference type="STRING" id="10090.ENSMUSP00000139187"/>
<dbReference type="PaxDb" id="10090-ENSMUSP00000139187"/>
<dbReference type="ProteomicsDB" id="308559"/>
<dbReference type="Antibodypedia" id="73844">
    <property type="antibodies" value="5 antibodies from 5 providers"/>
</dbReference>
<dbReference type="Ensembl" id="ENSMUST00000124565.4">
    <property type="protein sequence ID" value="ENSMUSP00000139187.2"/>
    <property type="gene ID" value="ENSMUSG00000086158.4"/>
</dbReference>
<dbReference type="GeneID" id="546143"/>
<dbReference type="KEGG" id="mmu:546143"/>
<dbReference type="UCSC" id="uc009qqk.3">
    <property type="organism name" value="mouse"/>
</dbReference>
<dbReference type="AGR" id="MGI:3648770"/>
<dbReference type="CTD" id="145788"/>
<dbReference type="MGI" id="MGI:3648770">
    <property type="gene designation" value="Pierce2"/>
</dbReference>
<dbReference type="VEuPathDB" id="HostDB:ENSMUSG00000086158"/>
<dbReference type="eggNOG" id="ENOG502S7B5">
    <property type="taxonomic scope" value="Eukaryota"/>
</dbReference>
<dbReference type="GeneTree" id="ENSGT00940000154745"/>
<dbReference type="HOGENOM" id="CLU_153970_0_0_1"/>
<dbReference type="InParanoid" id="V9GXK1"/>
<dbReference type="OMA" id="QFLPCNY"/>
<dbReference type="OrthoDB" id="546383at2759"/>
<dbReference type="PhylomeDB" id="V9GXK1"/>
<dbReference type="BioGRID-ORCS" id="546143">
    <property type="hits" value="3 hits in 71 CRISPR screens"/>
</dbReference>
<dbReference type="ChiTaRS" id="Ccpg1os">
    <property type="organism name" value="mouse"/>
</dbReference>
<dbReference type="PRO" id="PR:V9GXK1"/>
<dbReference type="Proteomes" id="UP000000589">
    <property type="component" value="Chromosome 9"/>
</dbReference>
<dbReference type="RNAct" id="V9GXK1">
    <property type="molecule type" value="protein"/>
</dbReference>
<dbReference type="Bgee" id="ENSMUSG00000086158">
    <property type="expression patterns" value="Expressed in spermatid and 184 other cell types or tissues"/>
</dbReference>
<dbReference type="GO" id="GO:0160111">
    <property type="term" value="C:axonemal A tubule inner sheath"/>
    <property type="evidence" value="ECO:0000314"/>
    <property type="project" value="UniProtKB"/>
</dbReference>
<dbReference type="GO" id="GO:0005879">
    <property type="term" value="C:axonemal microtubule"/>
    <property type="evidence" value="ECO:0000250"/>
    <property type="project" value="UniProtKB"/>
</dbReference>
<dbReference type="GO" id="GO:0036126">
    <property type="term" value="C:sperm flagellum"/>
    <property type="evidence" value="ECO:0000314"/>
    <property type="project" value="UniProtKB"/>
</dbReference>
<dbReference type="GO" id="GO:0035082">
    <property type="term" value="P:axoneme assembly"/>
    <property type="evidence" value="ECO:0000315"/>
    <property type="project" value="UniProtKB"/>
</dbReference>
<dbReference type="GO" id="GO:0003341">
    <property type="term" value="P:cilium movement"/>
    <property type="evidence" value="ECO:0000315"/>
    <property type="project" value="UniProtKB"/>
</dbReference>
<dbReference type="GO" id="GO:0007368">
    <property type="term" value="P:determination of left/right symmetry"/>
    <property type="evidence" value="ECO:0000315"/>
    <property type="project" value="UniProtKB"/>
</dbReference>
<dbReference type="GO" id="GO:0030317">
    <property type="term" value="P:flagellated sperm motility"/>
    <property type="evidence" value="ECO:0000314"/>
    <property type="project" value="UniProtKB"/>
</dbReference>
<dbReference type="InterPro" id="IPR026507">
    <property type="entry name" value="PIRC1/2"/>
</dbReference>
<dbReference type="PANTHER" id="PTHR20899">
    <property type="entry name" value="PIERCE HOMOLOG"/>
    <property type="match status" value="1"/>
</dbReference>
<dbReference type="PANTHER" id="PTHR20899:SF4">
    <property type="entry name" value="PIERCER OF MICROTUBULE WALL 2 PROTEIN"/>
    <property type="match status" value="1"/>
</dbReference>
<dbReference type="Pfam" id="PF14892">
    <property type="entry name" value="PIRC1_2"/>
    <property type="match status" value="1"/>
</dbReference>
<sequence length="122" mass="13714">MARETDCDLDKKTSLTSDAEMRPEPPALCVNPGNPVFSCMLDPKTLHTATSLSKAQMIMYKTSASQYGAFSPRPFFFPCKFLPQEQAFTEHLKTTGFYQNNSLNVGPDRTRTIDSPNYQHTL</sequence>